<comment type="function">
    <text evidence="3 4">Involved in the synthesis of meso-diaminopimelate (m-DAP or DL-DAP), required for both lysine and peptidoglycan biosynthesis. Catalyzes the direct conversion of tetrahydrodipicolinate to LL-diaminopimelate (PubMed:17093042, PubMed:21722650). Is also able to use meso-diaminopimelate, cystathionine, lysine or ornithine as substrates (PubMed:17093042).</text>
</comment>
<comment type="catalytic activity">
    <reaction evidence="2 3">
        <text>(2S,6S)-2,6-diaminopimelate + 2-oxoglutarate = (S)-2,3,4,5-tetrahydrodipicolinate + L-glutamate + H2O + H(+)</text>
        <dbReference type="Rhea" id="RHEA:23988"/>
        <dbReference type="ChEBI" id="CHEBI:15377"/>
        <dbReference type="ChEBI" id="CHEBI:15378"/>
        <dbReference type="ChEBI" id="CHEBI:16810"/>
        <dbReference type="ChEBI" id="CHEBI:16845"/>
        <dbReference type="ChEBI" id="CHEBI:29985"/>
        <dbReference type="ChEBI" id="CHEBI:57609"/>
        <dbReference type="EC" id="2.6.1.83"/>
    </reaction>
</comment>
<comment type="cofactor">
    <cofactor evidence="2 3 4">
        <name>pyridoxal 5'-phosphate</name>
        <dbReference type="ChEBI" id="CHEBI:597326"/>
    </cofactor>
</comment>
<comment type="biophysicochemical properties">
    <kinetics>
        <KM evidence="3">116 uM for LL-2,6-diaminopimelate (at 30 degrees Celsius and pH 7.6)</KM>
        <KM evidence="3">2.1 mM for 2-oxoglutarate (at 30 degrees Celsius and pH 7.6)</KM>
        <KM evidence="3">19 uM for L-2,3,4,5-tetrahydrodipicolinate (at 30 degrees Celsius and pH 7.6)</KM>
        <KM evidence="3">4 mM for glutamic acid (at 30 degrees Celsius and pH 7.6)</KM>
        <Vmax evidence="3">0.58 umol/min/mg enzyme for the forward reaction (at 30 degrees Celsius and pH 7.6)</Vmax>
        <Vmax evidence="3">0.01 umol/min/mg enzyme for the reverse reaction (at 30 degrees Celsius and pH 7.6)</Vmax>
    </kinetics>
</comment>
<comment type="pathway">
    <text evidence="2">Amino-acid biosynthesis; L-lysine biosynthesis via DAP pathway; LL-2,6-diaminopimelate from (S)-tetrahydrodipicolinate (aminotransferase route): step 1/1.</text>
</comment>
<comment type="subunit">
    <text evidence="2 4">Homodimer.</text>
</comment>
<comment type="developmental stage">
    <text evidence="3">Expressed as early as 8 hours after infection.</text>
</comment>
<comment type="similarity">
    <text evidence="2">Belongs to the class-I pyridoxal-phosphate-dependent aminotransferase family. LL-diaminopimelate aminotransferase subfamily.</text>
</comment>
<feature type="chain" id="PRO_0000312004" description="LL-diaminopimelate aminotransferase">
    <location>
        <begin position="1"/>
        <end position="394"/>
    </location>
</feature>
<feature type="binding site" evidence="1 7">
    <location>
        <position position="14"/>
    </location>
    <ligand>
        <name>substrate</name>
    </ligand>
</feature>
<feature type="binding site" evidence="1">
    <location>
        <position position="41"/>
    </location>
    <ligand>
        <name>substrate</name>
    </ligand>
</feature>
<feature type="binding site" evidence="1">
    <location>
        <position position="71"/>
    </location>
    <ligand>
        <name>pyridoxal 5'-phosphate</name>
        <dbReference type="ChEBI" id="CHEBI:597326"/>
    </ligand>
</feature>
<feature type="binding site" evidence="4">
    <location>
        <begin position="104"/>
        <end position="105"/>
    </location>
    <ligand>
        <name>pyridoxal 5'-phosphate</name>
        <dbReference type="ChEBI" id="CHEBI:597326"/>
    </ligand>
</feature>
<feature type="binding site" evidence="1">
    <location>
        <position position="105"/>
    </location>
    <ligand>
        <name>substrate</name>
    </ligand>
</feature>
<feature type="binding site" evidence="7">
    <location>
        <position position="128"/>
    </location>
    <ligand>
        <name>pyridoxal 5'-phosphate</name>
        <dbReference type="ChEBI" id="CHEBI:597326"/>
    </ligand>
</feature>
<feature type="binding site" evidence="1 7">
    <location>
        <position position="128"/>
    </location>
    <ligand>
        <name>substrate</name>
    </ligand>
</feature>
<feature type="binding site" evidence="4">
    <location>
        <position position="174"/>
    </location>
    <ligand>
        <name>pyridoxal 5'-phosphate</name>
        <dbReference type="ChEBI" id="CHEBI:597326"/>
    </ligand>
</feature>
<feature type="binding site" evidence="1 7">
    <location>
        <position position="174"/>
    </location>
    <ligand>
        <name>substrate</name>
    </ligand>
</feature>
<feature type="binding site" evidence="4">
    <location>
        <position position="205"/>
    </location>
    <ligand>
        <name>pyridoxal 5'-phosphate</name>
        <dbReference type="ChEBI" id="CHEBI:597326"/>
    </ligand>
</feature>
<feature type="binding site" evidence="4">
    <location>
        <begin position="233"/>
        <end position="235"/>
    </location>
    <ligand>
        <name>pyridoxal 5'-phosphate</name>
        <dbReference type="ChEBI" id="CHEBI:597326"/>
    </ligand>
</feature>
<feature type="binding site" evidence="1">
    <location>
        <position position="244"/>
    </location>
    <ligand>
        <name>pyridoxal 5'-phosphate</name>
        <dbReference type="ChEBI" id="CHEBI:597326"/>
    </ligand>
</feature>
<feature type="binding site" evidence="1 7">
    <location>
        <position position="275"/>
    </location>
    <ligand>
        <name>pyridoxal 5'-phosphate</name>
        <dbReference type="ChEBI" id="CHEBI:597326"/>
    </ligand>
</feature>
<feature type="binding site" evidence="1">
    <location>
        <position position="275"/>
    </location>
    <ligand>
        <name>substrate</name>
    </ligand>
</feature>
<feature type="binding site" evidence="1">
    <location>
        <position position="369"/>
    </location>
    <ligand>
        <name>substrate</name>
    </ligand>
</feature>
<feature type="modified residue" description="N6-(pyridoxal phosphate)lysine" evidence="4">
    <location>
        <position position="236"/>
    </location>
</feature>
<feature type="sequence conflict" description="In Ref. 1; ABN58777." evidence="6" ref="1">
    <original>F</original>
    <variation>C</variation>
    <location>
        <position position="92"/>
    </location>
</feature>
<feature type="sequence conflict" description="In Ref. 1; ABN58777." evidence="6" ref="1">
    <original>V</original>
    <variation>A</variation>
    <location>
        <position position="106"/>
    </location>
</feature>
<feature type="helix" evidence="8">
    <location>
        <begin position="5"/>
        <end position="8"/>
    </location>
</feature>
<feature type="helix" evidence="8">
    <location>
        <begin position="15"/>
        <end position="29"/>
    </location>
</feature>
<feature type="helix" evidence="8">
    <location>
        <begin position="49"/>
        <end position="62"/>
    </location>
</feature>
<feature type="strand" evidence="8">
    <location>
        <begin position="64"/>
        <end position="66"/>
    </location>
</feature>
<feature type="helix" evidence="8">
    <location>
        <begin position="78"/>
        <end position="86"/>
    </location>
</feature>
<feature type="helix" evidence="8">
    <location>
        <begin position="95"/>
        <end position="97"/>
    </location>
</feature>
<feature type="strand" evidence="8">
    <location>
        <begin position="98"/>
        <end position="102"/>
    </location>
</feature>
<feature type="helix" evidence="8">
    <location>
        <begin position="104"/>
        <end position="115"/>
    </location>
</feature>
<feature type="strand" evidence="8">
    <location>
        <begin position="120"/>
        <end position="126"/>
    </location>
</feature>
<feature type="helix" evidence="8">
    <location>
        <begin position="129"/>
        <end position="137"/>
    </location>
</feature>
<feature type="strand" evidence="8">
    <location>
        <begin position="141"/>
        <end position="147"/>
    </location>
</feature>
<feature type="helix" evidence="8">
    <location>
        <begin position="150"/>
        <end position="152"/>
    </location>
</feature>
<feature type="strand" evidence="8">
    <location>
        <begin position="165"/>
        <end position="172"/>
    </location>
</feature>
<feature type="turn" evidence="8">
    <location>
        <begin position="174"/>
        <end position="176"/>
    </location>
</feature>
<feature type="helix" evidence="8">
    <location>
        <begin position="182"/>
        <end position="194"/>
    </location>
</feature>
<feature type="strand" evidence="8">
    <location>
        <begin position="198"/>
        <end position="202"/>
    </location>
</feature>
<feature type="helix" evidence="8">
    <location>
        <begin position="206"/>
        <end position="208"/>
    </location>
</feature>
<feature type="helix" evidence="8">
    <location>
        <begin position="218"/>
        <end position="220"/>
    </location>
</feature>
<feature type="helix" evidence="8">
    <location>
        <begin position="224"/>
        <end position="226"/>
    </location>
</feature>
<feature type="strand" evidence="8">
    <location>
        <begin position="228"/>
        <end position="233"/>
    </location>
</feature>
<feature type="helix" evidence="8">
    <location>
        <begin position="236"/>
        <end position="238"/>
    </location>
</feature>
<feature type="strand" evidence="8">
    <location>
        <begin position="246"/>
        <end position="249"/>
    </location>
</feature>
<feature type="helix" evidence="8">
    <location>
        <begin position="262"/>
        <end position="273"/>
    </location>
</feature>
<feature type="helix" evidence="8">
    <location>
        <begin position="279"/>
        <end position="291"/>
    </location>
</feature>
<feature type="turn" evidence="8">
    <location>
        <begin position="292"/>
        <end position="294"/>
    </location>
</feature>
<feature type="helix" evidence="8">
    <location>
        <begin position="296"/>
        <end position="314"/>
    </location>
</feature>
<feature type="strand" evidence="8">
    <location>
        <begin position="318"/>
        <end position="321"/>
    </location>
</feature>
<feature type="strand" evidence="8">
    <location>
        <begin position="323"/>
        <end position="331"/>
    </location>
</feature>
<feature type="turn" evidence="8">
    <location>
        <begin position="339"/>
        <end position="341"/>
    </location>
</feature>
<feature type="helix" evidence="8">
    <location>
        <begin position="342"/>
        <end position="350"/>
    </location>
</feature>
<feature type="strand" evidence="8">
    <location>
        <begin position="351"/>
        <end position="353"/>
    </location>
</feature>
<feature type="helix" evidence="8">
    <location>
        <begin position="357"/>
        <end position="360"/>
    </location>
</feature>
<feature type="helix" evidence="8">
    <location>
        <begin position="362"/>
        <end position="364"/>
    </location>
</feature>
<feature type="strand" evidence="8">
    <location>
        <begin position="368"/>
        <end position="371"/>
    </location>
</feature>
<feature type="helix" evidence="8">
    <location>
        <begin position="376"/>
        <end position="387"/>
    </location>
</feature>
<protein>
    <recommendedName>
        <fullName evidence="2 5">LL-diaminopimelate aminotransferase</fullName>
        <shortName evidence="2 5">DAP-AT</shortName>
        <shortName evidence="2 5">DAP-aminotransferase</shortName>
        <shortName evidence="2 5">LL-DAP-aminotransferase</shortName>
        <ecNumber evidence="2 3">2.6.1.83</ecNumber>
    </recommendedName>
</protein>
<evidence type="ECO:0000250" key="1">
    <source>
        <dbReference type="UniProtKB" id="Q93ZN9"/>
    </source>
</evidence>
<evidence type="ECO:0000255" key="2">
    <source>
        <dbReference type="HAMAP-Rule" id="MF_01642"/>
    </source>
</evidence>
<evidence type="ECO:0000269" key="3">
    <source>
    </source>
</evidence>
<evidence type="ECO:0000269" key="4">
    <source>
    </source>
</evidence>
<evidence type="ECO:0000303" key="5">
    <source>
    </source>
</evidence>
<evidence type="ECO:0000305" key="6"/>
<evidence type="ECO:0000305" key="7">
    <source>
    </source>
</evidence>
<evidence type="ECO:0007829" key="8">
    <source>
        <dbReference type="PDB" id="3ASA"/>
    </source>
</evidence>
<proteinExistence type="evidence at protein level"/>
<dbReference type="EC" id="2.6.1.83" evidence="2 3"/>
<dbReference type="EMBL" id="EF396248">
    <property type="protein sequence ID" value="ABN58777.1"/>
    <property type="molecule type" value="Genomic_DNA"/>
</dbReference>
<dbReference type="EMBL" id="AE001273">
    <property type="protein sequence ID" value="AAC67987.2"/>
    <property type="molecule type" value="Genomic_DNA"/>
</dbReference>
<dbReference type="PIR" id="D71520">
    <property type="entry name" value="D71520"/>
</dbReference>
<dbReference type="RefSeq" id="NP_219900.1">
    <property type="nucleotide sequence ID" value="NC_000117.1"/>
</dbReference>
<dbReference type="RefSeq" id="WP_009871742.1">
    <property type="nucleotide sequence ID" value="NC_000117.1"/>
</dbReference>
<dbReference type="PDB" id="3ASA">
    <property type="method" value="X-ray"/>
    <property type="resolution" value="2.05 A"/>
    <property type="chains" value="A=1-394"/>
</dbReference>
<dbReference type="PDB" id="3ASB">
    <property type="method" value="X-ray"/>
    <property type="resolution" value="2.70 A"/>
    <property type="chains" value="A=1-394"/>
</dbReference>
<dbReference type="PDBsum" id="3ASA"/>
<dbReference type="PDBsum" id="3ASB"/>
<dbReference type="SMR" id="O84395"/>
<dbReference type="FunCoup" id="O84395">
    <property type="interactions" value="251"/>
</dbReference>
<dbReference type="STRING" id="272561.CT_390"/>
<dbReference type="EnsemblBacteria" id="AAC67987">
    <property type="protein sequence ID" value="AAC67987"/>
    <property type="gene ID" value="CT_390"/>
</dbReference>
<dbReference type="GeneID" id="884727"/>
<dbReference type="KEGG" id="ctr:CT_390"/>
<dbReference type="PATRIC" id="fig|272561.5.peg.420"/>
<dbReference type="HOGENOM" id="CLU_051433_0_0_0"/>
<dbReference type="InParanoid" id="O84395"/>
<dbReference type="OrthoDB" id="9813612at2"/>
<dbReference type="BRENDA" id="2.6.1.83">
    <property type="organism ID" value="1315"/>
</dbReference>
<dbReference type="SABIO-RK" id="O84395"/>
<dbReference type="UniPathway" id="UPA00034">
    <property type="reaction ID" value="UER00466"/>
</dbReference>
<dbReference type="EvolutionaryTrace" id="O84395"/>
<dbReference type="Proteomes" id="UP000000431">
    <property type="component" value="Chromosome"/>
</dbReference>
<dbReference type="GO" id="GO:0010285">
    <property type="term" value="F:L,L-diaminopimelate aminotransferase activity"/>
    <property type="evidence" value="ECO:0000314"/>
    <property type="project" value="UniProtKB"/>
</dbReference>
<dbReference type="GO" id="GO:0030170">
    <property type="term" value="F:pyridoxal phosphate binding"/>
    <property type="evidence" value="ECO:0000314"/>
    <property type="project" value="UniProtKB"/>
</dbReference>
<dbReference type="GO" id="GO:0033362">
    <property type="term" value="P:lysine biosynthetic process via diaminopimelate, diaminopimelate-aminotransferase pathway"/>
    <property type="evidence" value="ECO:0007669"/>
    <property type="project" value="UniProtKB-UniRule"/>
</dbReference>
<dbReference type="CDD" id="cd00609">
    <property type="entry name" value="AAT_like"/>
    <property type="match status" value="1"/>
</dbReference>
<dbReference type="FunFam" id="3.40.640.10:FF:000099">
    <property type="entry name" value="LL-diaminopimelate aminotransferase, chloroplastic"/>
    <property type="match status" value="1"/>
</dbReference>
<dbReference type="Gene3D" id="3.90.1150.10">
    <property type="entry name" value="Aspartate Aminotransferase, domain 1"/>
    <property type="match status" value="1"/>
</dbReference>
<dbReference type="Gene3D" id="3.40.640.10">
    <property type="entry name" value="Type I PLP-dependent aspartate aminotransferase-like (Major domain)"/>
    <property type="match status" value="1"/>
</dbReference>
<dbReference type="HAMAP" id="MF_01642">
    <property type="entry name" value="DapL_aminotrans_1"/>
    <property type="match status" value="1"/>
</dbReference>
<dbReference type="InterPro" id="IPR004839">
    <property type="entry name" value="Aminotransferase_I/II_large"/>
</dbReference>
<dbReference type="InterPro" id="IPR019942">
    <property type="entry name" value="DapL/ALD1"/>
</dbReference>
<dbReference type="InterPro" id="IPR004838">
    <property type="entry name" value="NHTrfase_class1_PyrdxlP-BS"/>
</dbReference>
<dbReference type="InterPro" id="IPR015424">
    <property type="entry name" value="PyrdxlP-dep_Trfase"/>
</dbReference>
<dbReference type="InterPro" id="IPR015421">
    <property type="entry name" value="PyrdxlP-dep_Trfase_major"/>
</dbReference>
<dbReference type="InterPro" id="IPR015422">
    <property type="entry name" value="PyrdxlP-dep_Trfase_small"/>
</dbReference>
<dbReference type="NCBIfam" id="TIGR03542">
    <property type="entry name" value="DAPAT_plant"/>
    <property type="match status" value="1"/>
</dbReference>
<dbReference type="PANTHER" id="PTHR43144">
    <property type="entry name" value="AMINOTRANSFERASE"/>
    <property type="match status" value="1"/>
</dbReference>
<dbReference type="Pfam" id="PF00155">
    <property type="entry name" value="Aminotran_1_2"/>
    <property type="match status" value="1"/>
</dbReference>
<dbReference type="SUPFAM" id="SSF53383">
    <property type="entry name" value="PLP-dependent transferases"/>
    <property type="match status" value="1"/>
</dbReference>
<dbReference type="PROSITE" id="PS00105">
    <property type="entry name" value="AA_TRANSFER_CLASS_1"/>
    <property type="match status" value="1"/>
</dbReference>
<reference key="1">
    <citation type="journal article" date="2006" name="Proc. Natl. Acad. Sci. U.S.A.">
        <title>L,L-diaminopimelate aminotransferase, a trans-kingdom enzyme shared by Chlamydia and plants for synthesis of diaminopimelate/lysine.</title>
        <authorList>
            <person name="McCoy A.J."/>
            <person name="Adams N.E."/>
            <person name="Hudson A.O."/>
            <person name="Gilvarg C."/>
            <person name="Leustek T."/>
            <person name="Maurelli A.T."/>
        </authorList>
    </citation>
    <scope>NUCLEOTIDE SEQUENCE [GENOMIC DNA]</scope>
    <scope>CATALYTIC ACTIVITY</scope>
    <scope>FUNCTION</scope>
    <scope>BIOPHYSICOCHEMICAL PROPERTIES</scope>
    <scope>COFACTOR</scope>
    <scope>DEVELOPMENTAL STAGE</scope>
    <scope>SUBSTRATE SPECIFICITY</scope>
    <source>
        <strain>L2</strain>
    </source>
</reference>
<reference key="2">
    <citation type="journal article" date="1998" name="Science">
        <title>Genome sequence of an obligate intracellular pathogen of humans: Chlamydia trachomatis.</title>
        <authorList>
            <person name="Stephens R.S."/>
            <person name="Kalman S."/>
            <person name="Lammel C.J."/>
            <person name="Fan J."/>
            <person name="Marathe R."/>
            <person name="Aravind L."/>
            <person name="Mitchell W.P."/>
            <person name="Olinger L."/>
            <person name="Tatusov R.L."/>
            <person name="Zhao Q."/>
            <person name="Koonin E.V."/>
            <person name="Davis R.W."/>
        </authorList>
    </citation>
    <scope>NUCLEOTIDE SEQUENCE [LARGE SCALE GENOMIC DNA]</scope>
    <source>
        <strain>ATCC VR-885 / DSM 19411 / UW-3/Cx</strain>
    </source>
</reference>
<reference key="3">
    <citation type="journal article" date="2011" name="J. Mol. Biol.">
        <title>The structure of LL-diaminopimelate aminotransferase from Chlamydia trachomatis: implications for its broad substrate specificity.</title>
        <authorList>
            <person name="Watanabe N."/>
            <person name="Clay M.D."/>
            <person name="van Belkum M.J."/>
            <person name="Fan C."/>
            <person name="Vederas J.C."/>
            <person name="James M.N."/>
        </authorList>
    </citation>
    <scope>X-RAY CRYSTALLOGRAPHY (2.05 ANGSTROMS) IN COMPLEX WITH PYRIDOXAL PHOSPHATE ANALOG</scope>
    <scope>FUNCTION</scope>
    <scope>COFACTOR</scope>
    <scope>SUBUNIT</scope>
</reference>
<organism>
    <name type="scientific">Chlamydia trachomatis serovar D (strain ATCC VR-885 / DSM 19411 / UW-3/Cx)</name>
    <dbReference type="NCBI Taxonomy" id="272561"/>
    <lineage>
        <taxon>Bacteria</taxon>
        <taxon>Pseudomonadati</taxon>
        <taxon>Chlamydiota</taxon>
        <taxon>Chlamydiia</taxon>
        <taxon>Chlamydiales</taxon>
        <taxon>Chlamydiaceae</taxon>
        <taxon>Chlamydia/Chlamydophila group</taxon>
        <taxon>Chlamydia</taxon>
    </lineage>
</organism>
<keyword id="KW-0002">3D-structure</keyword>
<keyword id="KW-0032">Aminotransferase</keyword>
<keyword id="KW-0663">Pyridoxal phosphate</keyword>
<keyword id="KW-1185">Reference proteome</keyword>
<keyword id="KW-0808">Transferase</keyword>
<gene>
    <name evidence="2" type="primary">dapL</name>
    <name type="synonym">aspC</name>
    <name type="ordered locus">CT_390</name>
</gene>
<sequence>MKRNPHFVSLTKNYLFADLQKRVAQFRLENPQHTVINLSIGDTTQPLNASVAEAFASSIARLSSPTTCRGYGPDFGLPALRQKLSEDFYRGFVDAKEIFISDGAKVDLFRLLSFFGPNQTVAIQDPSYPAYLDIARLTGAKEIIALPCLQENAFFPEFPEDTHIDILCLCSPNNPTGTVLNKDQLRAIVHYAIEHEILILFDAAYSTFISDPSLPKSIFEIPDARFCAIEINSFSKPLGFAGIRLGWTVIPQELTYADGHFVIQDWERFLSTTFNGASIPAQEAGVAGLSILPQLEAIHYYRENSDLLRKALLATGFEVFGGEHAPYLWVKPTQANISDRDLFDFFLREYHIAITPGIGFGRSGSGFVRFSSLGKREDILAACERLQMAPALQS</sequence>
<name>DAPAT_CHLTR</name>
<accession>O84395</accession>
<accession>A3FKT7</accession>